<comment type="catalytic activity">
    <reaction evidence="2">
        <text>GTP + H2O = 7,8-dihydroneopterin 3'-triphosphate + formate + H(+)</text>
        <dbReference type="Rhea" id="RHEA:17473"/>
        <dbReference type="ChEBI" id="CHEBI:15377"/>
        <dbReference type="ChEBI" id="CHEBI:15378"/>
        <dbReference type="ChEBI" id="CHEBI:15740"/>
        <dbReference type="ChEBI" id="CHEBI:37565"/>
        <dbReference type="ChEBI" id="CHEBI:58462"/>
        <dbReference type="EC" id="3.5.4.16"/>
    </reaction>
</comment>
<comment type="pathway">
    <text evidence="2">Cofactor biosynthesis; 7,8-dihydroneopterin triphosphate biosynthesis; 7,8-dihydroneopterin triphosphate from GTP: step 1/1.</text>
</comment>
<comment type="subunit">
    <text evidence="1">Toroid-shaped homodecamer, composed of two pentamers of five dimers.</text>
</comment>
<comment type="similarity">
    <text evidence="2">Belongs to the GTP cyclohydrolase I family.</text>
</comment>
<accession>Q8YH94</accession>
<name>GCH1_BRUME</name>
<gene>
    <name evidence="2" type="primary">folE</name>
    <name type="ordered locus">BMEI0910</name>
</gene>
<feature type="chain" id="PRO_0000119390" description="GTP cyclohydrolase 1">
    <location>
        <begin position="1"/>
        <end position="213"/>
    </location>
</feature>
<feature type="binding site" evidence="2">
    <location>
        <position position="104"/>
    </location>
    <ligand>
        <name>Zn(2+)</name>
        <dbReference type="ChEBI" id="CHEBI:29105"/>
    </ligand>
</feature>
<feature type="binding site" evidence="2">
    <location>
        <position position="107"/>
    </location>
    <ligand>
        <name>Zn(2+)</name>
        <dbReference type="ChEBI" id="CHEBI:29105"/>
    </ligand>
</feature>
<feature type="binding site" evidence="2">
    <location>
        <position position="175"/>
    </location>
    <ligand>
        <name>Zn(2+)</name>
        <dbReference type="ChEBI" id="CHEBI:29105"/>
    </ligand>
</feature>
<keyword id="KW-0342">GTP-binding</keyword>
<keyword id="KW-0378">Hydrolase</keyword>
<keyword id="KW-0479">Metal-binding</keyword>
<keyword id="KW-0547">Nucleotide-binding</keyword>
<keyword id="KW-0554">One-carbon metabolism</keyword>
<keyword id="KW-0862">Zinc</keyword>
<proteinExistence type="inferred from homology"/>
<dbReference type="EC" id="3.5.4.16" evidence="2"/>
<dbReference type="EMBL" id="AE008917">
    <property type="protein sequence ID" value="AAL52091.1"/>
    <property type="molecule type" value="Genomic_DNA"/>
</dbReference>
<dbReference type="PIR" id="AH3365">
    <property type="entry name" value="AH3365"/>
</dbReference>
<dbReference type="RefSeq" id="WP_002964194.1">
    <property type="nucleotide sequence ID" value="NZ_GG703778.1"/>
</dbReference>
<dbReference type="SMR" id="Q8YH94"/>
<dbReference type="GeneID" id="93016580"/>
<dbReference type="KEGG" id="bme:BMEI0910"/>
<dbReference type="KEGG" id="bmel:DK63_512"/>
<dbReference type="PATRIC" id="fig|224914.52.peg.535"/>
<dbReference type="eggNOG" id="COG0302">
    <property type="taxonomic scope" value="Bacteria"/>
</dbReference>
<dbReference type="PhylomeDB" id="Q8YH94"/>
<dbReference type="UniPathway" id="UPA00848">
    <property type="reaction ID" value="UER00151"/>
</dbReference>
<dbReference type="Proteomes" id="UP000000419">
    <property type="component" value="Chromosome I"/>
</dbReference>
<dbReference type="GO" id="GO:0005737">
    <property type="term" value="C:cytoplasm"/>
    <property type="evidence" value="ECO:0007669"/>
    <property type="project" value="TreeGrafter"/>
</dbReference>
<dbReference type="GO" id="GO:0005525">
    <property type="term" value="F:GTP binding"/>
    <property type="evidence" value="ECO:0007669"/>
    <property type="project" value="UniProtKB-KW"/>
</dbReference>
<dbReference type="GO" id="GO:0003934">
    <property type="term" value="F:GTP cyclohydrolase I activity"/>
    <property type="evidence" value="ECO:0007669"/>
    <property type="project" value="UniProtKB-UniRule"/>
</dbReference>
<dbReference type="GO" id="GO:0008270">
    <property type="term" value="F:zinc ion binding"/>
    <property type="evidence" value="ECO:0007669"/>
    <property type="project" value="UniProtKB-UniRule"/>
</dbReference>
<dbReference type="GO" id="GO:0006730">
    <property type="term" value="P:one-carbon metabolic process"/>
    <property type="evidence" value="ECO:0007669"/>
    <property type="project" value="UniProtKB-UniRule"/>
</dbReference>
<dbReference type="GO" id="GO:0006729">
    <property type="term" value="P:tetrahydrobiopterin biosynthetic process"/>
    <property type="evidence" value="ECO:0007669"/>
    <property type="project" value="TreeGrafter"/>
</dbReference>
<dbReference type="GO" id="GO:0046654">
    <property type="term" value="P:tetrahydrofolate biosynthetic process"/>
    <property type="evidence" value="ECO:0007669"/>
    <property type="project" value="UniProtKB-UniRule"/>
</dbReference>
<dbReference type="FunFam" id="1.10.286.10:FF:000001">
    <property type="entry name" value="GTP cyclohydrolase 1"/>
    <property type="match status" value="1"/>
</dbReference>
<dbReference type="FunFam" id="3.30.1130.10:FF:000001">
    <property type="entry name" value="GTP cyclohydrolase 1"/>
    <property type="match status" value="1"/>
</dbReference>
<dbReference type="Gene3D" id="1.10.286.10">
    <property type="match status" value="1"/>
</dbReference>
<dbReference type="Gene3D" id="3.30.1130.10">
    <property type="match status" value="1"/>
</dbReference>
<dbReference type="HAMAP" id="MF_00223">
    <property type="entry name" value="FolE"/>
    <property type="match status" value="1"/>
</dbReference>
<dbReference type="InterPro" id="IPR043133">
    <property type="entry name" value="GTP-CH-I_C/QueF"/>
</dbReference>
<dbReference type="InterPro" id="IPR043134">
    <property type="entry name" value="GTP-CH-I_N"/>
</dbReference>
<dbReference type="InterPro" id="IPR001474">
    <property type="entry name" value="GTP_CycHdrlase_I"/>
</dbReference>
<dbReference type="InterPro" id="IPR018234">
    <property type="entry name" value="GTP_CycHdrlase_I_CS"/>
</dbReference>
<dbReference type="InterPro" id="IPR020602">
    <property type="entry name" value="GTP_CycHdrlase_I_dom"/>
</dbReference>
<dbReference type="NCBIfam" id="TIGR00063">
    <property type="entry name" value="folE"/>
    <property type="match status" value="1"/>
</dbReference>
<dbReference type="NCBIfam" id="NF006825">
    <property type="entry name" value="PRK09347.1-2"/>
    <property type="match status" value="1"/>
</dbReference>
<dbReference type="NCBIfam" id="NF006826">
    <property type="entry name" value="PRK09347.1-3"/>
    <property type="match status" value="1"/>
</dbReference>
<dbReference type="PANTHER" id="PTHR11109:SF7">
    <property type="entry name" value="GTP CYCLOHYDROLASE 1"/>
    <property type="match status" value="1"/>
</dbReference>
<dbReference type="PANTHER" id="PTHR11109">
    <property type="entry name" value="GTP CYCLOHYDROLASE I"/>
    <property type="match status" value="1"/>
</dbReference>
<dbReference type="Pfam" id="PF01227">
    <property type="entry name" value="GTP_cyclohydroI"/>
    <property type="match status" value="1"/>
</dbReference>
<dbReference type="SUPFAM" id="SSF55620">
    <property type="entry name" value="Tetrahydrobiopterin biosynthesis enzymes-like"/>
    <property type="match status" value="1"/>
</dbReference>
<dbReference type="PROSITE" id="PS00859">
    <property type="entry name" value="GTP_CYCLOHYDROL_1_1"/>
    <property type="match status" value="1"/>
</dbReference>
<sequence>MDARILQDNDDTSLPVNQASVTRIHKKPGKAEAEAAVRTLLLWAGEDPDREGLLETPKRVAKAYQELFGGYSESPEEVLGTTFEEVAGYDDMVLVKDISFFSHCEHHMVPIIGKAHVAYLPEGRVVGLSKIARVVDIFARRLQTQESITAQIADSIQRILKPRGVAVMIEAEHMCMAMRSIRKQGSSTITTTFTGDFKEKADQQVRFMTLIRT</sequence>
<reference key="1">
    <citation type="journal article" date="2002" name="Proc. Natl. Acad. Sci. U.S.A.">
        <title>The genome sequence of the facultative intracellular pathogen Brucella melitensis.</title>
        <authorList>
            <person name="DelVecchio V.G."/>
            <person name="Kapatral V."/>
            <person name="Redkar R.J."/>
            <person name="Patra G."/>
            <person name="Mujer C."/>
            <person name="Los T."/>
            <person name="Ivanova N."/>
            <person name="Anderson I."/>
            <person name="Bhattacharyya A."/>
            <person name="Lykidis A."/>
            <person name="Reznik G."/>
            <person name="Jablonski L."/>
            <person name="Larsen N."/>
            <person name="D'Souza M."/>
            <person name="Bernal A."/>
            <person name="Mazur M."/>
            <person name="Goltsman E."/>
            <person name="Selkov E."/>
            <person name="Elzer P.H."/>
            <person name="Hagius S."/>
            <person name="O'Callaghan D."/>
            <person name="Letesson J.-J."/>
            <person name="Haselkorn R."/>
            <person name="Kyrpides N.C."/>
            <person name="Overbeek R."/>
        </authorList>
    </citation>
    <scope>NUCLEOTIDE SEQUENCE [LARGE SCALE GENOMIC DNA]</scope>
    <source>
        <strain>ATCC 23456 / CCUG 17765 / NCTC 10094 / 16M</strain>
    </source>
</reference>
<evidence type="ECO:0000250" key="1"/>
<evidence type="ECO:0000255" key="2">
    <source>
        <dbReference type="HAMAP-Rule" id="MF_00223"/>
    </source>
</evidence>
<organism>
    <name type="scientific">Brucella melitensis biotype 1 (strain ATCC 23456 / CCUG 17765 / NCTC 10094 / 16M)</name>
    <dbReference type="NCBI Taxonomy" id="224914"/>
    <lineage>
        <taxon>Bacteria</taxon>
        <taxon>Pseudomonadati</taxon>
        <taxon>Pseudomonadota</taxon>
        <taxon>Alphaproteobacteria</taxon>
        <taxon>Hyphomicrobiales</taxon>
        <taxon>Brucellaceae</taxon>
        <taxon>Brucella/Ochrobactrum group</taxon>
        <taxon>Brucella</taxon>
    </lineage>
</organism>
<protein>
    <recommendedName>
        <fullName evidence="2">GTP cyclohydrolase 1</fullName>
        <ecNumber evidence="2">3.5.4.16</ecNumber>
    </recommendedName>
    <alternativeName>
        <fullName evidence="2">GTP cyclohydrolase I</fullName>
        <shortName evidence="2">GTP-CH-I</shortName>
    </alternativeName>
</protein>